<feature type="chain" id="PRO_0000395298" description="Dipeptide permease D">
    <location>
        <begin position="1"/>
        <end position="493"/>
    </location>
</feature>
<feature type="transmembrane region" description="Helical" evidence="1">
    <location>
        <begin position="14"/>
        <end position="34"/>
    </location>
</feature>
<feature type="transmembrane region" description="Helical" evidence="1">
    <location>
        <begin position="49"/>
        <end position="69"/>
    </location>
</feature>
<feature type="transmembrane region" description="Helical" evidence="1">
    <location>
        <begin position="91"/>
        <end position="111"/>
    </location>
</feature>
<feature type="transmembrane region" description="Helical" evidence="1">
    <location>
        <begin position="138"/>
        <end position="158"/>
    </location>
</feature>
<feature type="transmembrane region" description="Helical" evidence="1">
    <location>
        <begin position="167"/>
        <end position="187"/>
    </location>
</feature>
<feature type="transmembrane region" description="Helical" evidence="1">
    <location>
        <begin position="212"/>
        <end position="232"/>
    </location>
</feature>
<feature type="transmembrane region" description="Helical" evidence="1">
    <location>
        <begin position="235"/>
        <end position="255"/>
    </location>
</feature>
<feature type="transmembrane region" description="Helical" evidence="1">
    <location>
        <begin position="267"/>
        <end position="287"/>
    </location>
</feature>
<feature type="transmembrane region" description="Helical" evidence="1">
    <location>
        <begin position="312"/>
        <end position="332"/>
    </location>
</feature>
<feature type="transmembrane region" description="Helical" evidence="1">
    <location>
        <begin position="344"/>
        <end position="364"/>
    </location>
</feature>
<feature type="transmembrane region" description="Helical" evidence="1">
    <location>
        <begin position="379"/>
        <end position="399"/>
    </location>
</feature>
<feature type="transmembrane region" description="Helical" evidence="1">
    <location>
        <begin position="413"/>
        <end position="433"/>
    </location>
</feature>
<feature type="transmembrane region" description="Helical" evidence="1">
    <location>
        <begin position="458"/>
        <end position="478"/>
    </location>
</feature>
<protein>
    <recommendedName>
        <fullName evidence="1">Dipeptide permease D</fullName>
    </recommendedName>
</protein>
<gene>
    <name evidence="1" type="primary">dtpD</name>
    <name type="ordered locus">SCH_0729</name>
</gene>
<reference key="1">
    <citation type="journal article" date="2005" name="Nucleic Acids Res.">
        <title>The genome sequence of Salmonella enterica serovar Choleraesuis, a highly invasive and resistant zoonotic pathogen.</title>
        <authorList>
            <person name="Chiu C.-H."/>
            <person name="Tang P."/>
            <person name="Chu C."/>
            <person name="Hu S."/>
            <person name="Bao Q."/>
            <person name="Yu J."/>
            <person name="Chou Y.-Y."/>
            <person name="Wang H.-S."/>
            <person name="Lee Y.-S."/>
        </authorList>
    </citation>
    <scope>NUCLEOTIDE SEQUENCE [LARGE SCALE GENOMIC DNA]</scope>
    <source>
        <strain>SC-B67</strain>
    </source>
</reference>
<accession>Q57RM6</accession>
<evidence type="ECO:0000255" key="1">
    <source>
        <dbReference type="HAMAP-Rule" id="MF_01880"/>
    </source>
</evidence>
<evidence type="ECO:0000305" key="2"/>
<organism>
    <name type="scientific">Salmonella choleraesuis (strain SC-B67)</name>
    <dbReference type="NCBI Taxonomy" id="321314"/>
    <lineage>
        <taxon>Bacteria</taxon>
        <taxon>Pseudomonadati</taxon>
        <taxon>Pseudomonadota</taxon>
        <taxon>Gammaproteobacteria</taxon>
        <taxon>Enterobacterales</taxon>
        <taxon>Enterobacteriaceae</taxon>
        <taxon>Salmonella</taxon>
    </lineage>
</organism>
<dbReference type="EMBL" id="AE017220">
    <property type="protein sequence ID" value="AAX64635.1"/>
    <property type="status" value="ALT_INIT"/>
    <property type="molecule type" value="Genomic_DNA"/>
</dbReference>
<dbReference type="RefSeq" id="WP_023234741.1">
    <property type="nucleotide sequence ID" value="NC_006905.1"/>
</dbReference>
<dbReference type="SMR" id="Q57RM6"/>
<dbReference type="KEGG" id="sec:SCH_0729"/>
<dbReference type="HOGENOM" id="CLU_004790_0_0_6"/>
<dbReference type="Proteomes" id="UP000000538">
    <property type="component" value="Chromosome"/>
</dbReference>
<dbReference type="GO" id="GO:0005886">
    <property type="term" value="C:plasma membrane"/>
    <property type="evidence" value="ECO:0007669"/>
    <property type="project" value="UniProtKB-SubCell"/>
</dbReference>
<dbReference type="GO" id="GO:0071916">
    <property type="term" value="F:dipeptide transmembrane transporter activity"/>
    <property type="evidence" value="ECO:0007669"/>
    <property type="project" value="UniProtKB-UniRule"/>
</dbReference>
<dbReference type="GO" id="GO:0015333">
    <property type="term" value="F:peptide:proton symporter activity"/>
    <property type="evidence" value="ECO:0007669"/>
    <property type="project" value="UniProtKB-UniRule"/>
</dbReference>
<dbReference type="GO" id="GO:0015031">
    <property type="term" value="P:protein transport"/>
    <property type="evidence" value="ECO:0007669"/>
    <property type="project" value="UniProtKB-KW"/>
</dbReference>
<dbReference type="CDD" id="cd17346">
    <property type="entry name" value="MFS_DtpA_like"/>
    <property type="match status" value="1"/>
</dbReference>
<dbReference type="FunFam" id="1.20.1250.20:FF:000035">
    <property type="entry name" value="Dipeptide permease D"/>
    <property type="match status" value="1"/>
</dbReference>
<dbReference type="Gene3D" id="1.20.1250.20">
    <property type="entry name" value="MFS general substrate transporter like domains"/>
    <property type="match status" value="1"/>
</dbReference>
<dbReference type="HAMAP" id="MF_01880">
    <property type="entry name" value="PTR2_DtpD_subfam"/>
    <property type="match status" value="1"/>
</dbReference>
<dbReference type="InterPro" id="IPR023777">
    <property type="entry name" value="AA/pep_transptr_DtpD"/>
</dbReference>
<dbReference type="InterPro" id="IPR005279">
    <property type="entry name" value="Dipep/tripep_permease"/>
</dbReference>
<dbReference type="InterPro" id="IPR020846">
    <property type="entry name" value="MFS_dom"/>
</dbReference>
<dbReference type="InterPro" id="IPR036259">
    <property type="entry name" value="MFS_trans_sf"/>
</dbReference>
<dbReference type="InterPro" id="IPR050171">
    <property type="entry name" value="MFS_Transporters"/>
</dbReference>
<dbReference type="InterPro" id="IPR000109">
    <property type="entry name" value="POT_fam"/>
</dbReference>
<dbReference type="InterPro" id="IPR018456">
    <property type="entry name" value="PTR2_symporter_CS"/>
</dbReference>
<dbReference type="NCBIfam" id="NF012006">
    <property type="entry name" value="PRK15462.1"/>
    <property type="match status" value="1"/>
</dbReference>
<dbReference type="NCBIfam" id="TIGR00924">
    <property type="entry name" value="yjdL_sub1_fam"/>
    <property type="match status" value="1"/>
</dbReference>
<dbReference type="PANTHER" id="PTHR23517:SF15">
    <property type="entry name" value="PROTON-DEPENDENT OLIGOPEPTIDE FAMILY TRANSPORT PROTEIN"/>
    <property type="match status" value="1"/>
</dbReference>
<dbReference type="PANTHER" id="PTHR23517">
    <property type="entry name" value="RESISTANCE PROTEIN MDTM, PUTATIVE-RELATED-RELATED"/>
    <property type="match status" value="1"/>
</dbReference>
<dbReference type="Pfam" id="PF00854">
    <property type="entry name" value="PTR2"/>
    <property type="match status" value="1"/>
</dbReference>
<dbReference type="SUPFAM" id="SSF103473">
    <property type="entry name" value="MFS general substrate transporter"/>
    <property type="match status" value="1"/>
</dbReference>
<dbReference type="PROSITE" id="PS50850">
    <property type="entry name" value="MFS"/>
    <property type="match status" value="1"/>
</dbReference>
<dbReference type="PROSITE" id="PS01022">
    <property type="entry name" value="PTR2_1"/>
    <property type="match status" value="1"/>
</dbReference>
<dbReference type="PROSITE" id="PS01023">
    <property type="entry name" value="PTR2_2"/>
    <property type="match status" value="1"/>
</dbReference>
<name>DTPD_SALCH</name>
<sequence>MNKQASQPRAIYYVVALQIWEYFSFYGMRALLILYLTNQLKYDDNHAYELFSAYCSLVYVTPILGGYLADKVLGNRMAVMLGAFLMAIGHLVLGASEIAPTFLYLSLAIIVCGYGLFKSNISCLLGELYQPEDPRRDGGFSLLYAAGNIGSIVAPIACGYVQEEYSWAMGFALAAIGMLAGLVIFLCGNRHFTHTTGVNKAVLCARSYLLPNWGWLLILLVAAPLLITVLFWKEWSVYALIVATAISLVVLAKIYRQAQTAKQRKELGLIVTLTLFSMLFWAFAQQGGSSISLYIDRFVNRDILGYSVPTAMFQSVNAFAVMLCGVVLAWLVKESVSGNRTVRIWGKFALGLGLMSAGFCILTLSARWSAAYGHSSMPLMVLGLAVMGFAELFIDPVAMSQITRIDIPGVTGVLTGIYMLLSGAIANYLAGVIADQTSQSAFDASGAVNYAINAYVDVFEQITWGALACVGVVLLIWLYQSFKFKSRALAVES</sequence>
<proteinExistence type="inferred from homology"/>
<keyword id="KW-0997">Cell inner membrane</keyword>
<keyword id="KW-1003">Cell membrane</keyword>
<keyword id="KW-0472">Membrane</keyword>
<keyword id="KW-0571">Peptide transport</keyword>
<keyword id="KW-0653">Protein transport</keyword>
<keyword id="KW-0812">Transmembrane</keyword>
<keyword id="KW-1133">Transmembrane helix</keyword>
<keyword id="KW-0813">Transport</keyword>
<comment type="function">
    <text evidence="1">Probable proton-dependent permease that transports dipeptides.</text>
</comment>
<comment type="subcellular location">
    <subcellularLocation>
        <location evidence="1">Cell inner membrane</location>
        <topology evidence="1">Multi-pass membrane protein</topology>
    </subcellularLocation>
</comment>
<comment type="similarity">
    <text evidence="1">Belongs to the major facilitator superfamily. Proton-dependent oligopeptide transporter (POT/PTR) (TC 2.A.17) family. DtpD subfamily.</text>
</comment>
<comment type="sequence caution" evidence="2">
    <conflict type="erroneous initiation">
        <sequence resource="EMBL-CDS" id="AAX64635"/>
    </conflict>
    <text>Extended N-terminus.</text>
</comment>